<sequence>MKKPLLLTLLCMILAGCDNPKSLESFTPEMASFSNEFDFDPLRGPVKDFSQTLMSENGEVAKQVTGTLSQEGCFDTLELHDLENNTGLALVLDANYYRDAQTLEKKVQLQGKCQLAALPSAGVTWETDDNGFVVSATGKEMKVEYRYDSEGYPLGKTTINSQNTLSVTAKPSADPRKKLDYTAVSRVDDRQVGNVTQSCEYDAYANPVDCRLVIVDESVKPAVSHHYTIKNRIDYY</sequence>
<keyword id="KW-1003">Cell membrane</keyword>
<keyword id="KW-0449">Lipoprotein</keyword>
<keyword id="KW-0472">Membrane</keyword>
<keyword id="KW-0564">Palmitate</keyword>
<keyword id="KW-0732">Signal</keyword>
<organism>
    <name type="scientific">Salmonella paratyphi B (strain ATCC BAA-1250 / SPB7)</name>
    <dbReference type="NCBI Taxonomy" id="1016998"/>
    <lineage>
        <taxon>Bacteria</taxon>
        <taxon>Pseudomonadati</taxon>
        <taxon>Pseudomonadota</taxon>
        <taxon>Gammaproteobacteria</taxon>
        <taxon>Enterobacterales</taxon>
        <taxon>Enterobacteriaceae</taxon>
        <taxon>Salmonella</taxon>
    </lineage>
</organism>
<comment type="subcellular location">
    <subcellularLocation>
        <location evidence="1">Cell membrane</location>
        <topology evidence="1">Lipid-anchor</topology>
    </subcellularLocation>
</comment>
<comment type="similarity">
    <text evidence="1">Belongs to the UPF0257 family.</text>
</comment>
<accession>A9MZX2</accession>
<evidence type="ECO:0000255" key="1">
    <source>
        <dbReference type="HAMAP-Rule" id="MF_01065"/>
    </source>
</evidence>
<proteinExistence type="inferred from homology"/>
<feature type="signal peptide" evidence="1">
    <location>
        <begin position="1"/>
        <end position="16"/>
    </location>
</feature>
<feature type="chain" id="PRO_1000084486" description="UPF0257 lipoprotein YnfC">
    <location>
        <begin position="17"/>
        <end position="236"/>
    </location>
</feature>
<feature type="lipid moiety-binding region" description="N-palmitoyl cysteine" evidence="1">
    <location>
        <position position="17"/>
    </location>
</feature>
<feature type="lipid moiety-binding region" description="S-diacylglycerol cysteine" evidence="1">
    <location>
        <position position="17"/>
    </location>
</feature>
<name>YNFC_SALPB</name>
<gene>
    <name evidence="1" type="primary">ynfC</name>
    <name type="ordered locus">SPAB_01810</name>
</gene>
<protein>
    <recommendedName>
        <fullName evidence="1">UPF0257 lipoprotein YnfC</fullName>
    </recommendedName>
</protein>
<reference key="1">
    <citation type="submission" date="2007-11" db="EMBL/GenBank/DDBJ databases">
        <authorList>
            <consortium name="The Salmonella enterica serovar Paratyphi B Genome Sequencing Project"/>
            <person name="McClelland M."/>
            <person name="Sanderson E.K."/>
            <person name="Porwollik S."/>
            <person name="Spieth J."/>
            <person name="Clifton W.S."/>
            <person name="Fulton R."/>
            <person name="Cordes M."/>
            <person name="Wollam A."/>
            <person name="Shah N."/>
            <person name="Pepin K."/>
            <person name="Bhonagiri V."/>
            <person name="Nash W."/>
            <person name="Johnson M."/>
            <person name="Thiruvilangam P."/>
            <person name="Wilson R."/>
        </authorList>
    </citation>
    <scope>NUCLEOTIDE SEQUENCE [LARGE SCALE GENOMIC DNA]</scope>
    <source>
        <strain>ATCC BAA-1250 / SPB7</strain>
    </source>
</reference>
<dbReference type="EMBL" id="CP000886">
    <property type="protein sequence ID" value="ABX67203.1"/>
    <property type="molecule type" value="Genomic_DNA"/>
</dbReference>
<dbReference type="RefSeq" id="WP_000743122.1">
    <property type="nucleotide sequence ID" value="NC_010102.1"/>
</dbReference>
<dbReference type="SMR" id="A9MZX2"/>
<dbReference type="KEGG" id="spq:SPAB_01810"/>
<dbReference type="PATRIC" id="fig|1016998.12.peg.1705"/>
<dbReference type="HOGENOM" id="CLU_1174761_0_0_6"/>
<dbReference type="BioCyc" id="SENT1016998:SPAB_RS07335-MONOMER"/>
<dbReference type="Proteomes" id="UP000008556">
    <property type="component" value="Chromosome"/>
</dbReference>
<dbReference type="GO" id="GO:0005886">
    <property type="term" value="C:plasma membrane"/>
    <property type="evidence" value="ECO:0007669"/>
    <property type="project" value="UniProtKB-SubCell"/>
</dbReference>
<dbReference type="HAMAP" id="MF_01065">
    <property type="entry name" value="UPF0257"/>
    <property type="match status" value="1"/>
</dbReference>
<dbReference type="InterPro" id="IPR010646">
    <property type="entry name" value="UPF0257"/>
</dbReference>
<dbReference type="NCBIfam" id="NF002798">
    <property type="entry name" value="PRK02939.1"/>
    <property type="match status" value="1"/>
</dbReference>
<dbReference type="Pfam" id="PF06788">
    <property type="entry name" value="UPF0257"/>
    <property type="match status" value="1"/>
</dbReference>
<dbReference type="PROSITE" id="PS51257">
    <property type="entry name" value="PROKAR_LIPOPROTEIN"/>
    <property type="match status" value="1"/>
</dbReference>